<evidence type="ECO:0000250" key="1"/>
<evidence type="ECO:0000255" key="2"/>
<evidence type="ECO:0000255" key="3">
    <source>
        <dbReference type="PROSITE-ProRule" id="PRU10095"/>
    </source>
</evidence>
<evidence type="ECO:0000305" key="4"/>
<protein>
    <recommendedName>
        <fullName>Mitochondrial intermediate peptidase</fullName>
        <shortName>MIP</shortName>
        <ecNumber>3.4.24.59</ecNumber>
    </recommendedName>
    <alternativeName>
        <fullName>Octapeptidyl aminopeptidase</fullName>
    </alternativeName>
</protein>
<gene>
    <name type="primary">oct1</name>
    <name type="ORF">SPAC1F3.10c</name>
</gene>
<dbReference type="EC" id="3.4.24.59"/>
<dbReference type="EMBL" id="CU329670">
    <property type="protein sequence ID" value="CAA94628.1"/>
    <property type="molecule type" value="Genomic_DNA"/>
</dbReference>
<dbReference type="PIR" id="T38081">
    <property type="entry name" value="T38081"/>
</dbReference>
<dbReference type="RefSeq" id="NP_593013.1">
    <property type="nucleotide sequence ID" value="NM_001018412.2"/>
</dbReference>
<dbReference type="SMR" id="Q10415"/>
<dbReference type="FunCoup" id="Q10415">
    <property type="interactions" value="423"/>
</dbReference>
<dbReference type="STRING" id="284812.Q10415"/>
<dbReference type="iPTMnet" id="Q10415"/>
<dbReference type="PaxDb" id="4896-SPAC1F3.10c.1"/>
<dbReference type="EnsemblFungi" id="SPAC1F3.10c.1">
    <property type="protein sequence ID" value="SPAC1F3.10c.1:pep"/>
    <property type="gene ID" value="SPAC1F3.10c"/>
</dbReference>
<dbReference type="GeneID" id="2541640"/>
<dbReference type="KEGG" id="spo:2541640"/>
<dbReference type="PomBase" id="SPAC1F3.10c">
    <property type="gene designation" value="oct1"/>
</dbReference>
<dbReference type="VEuPathDB" id="FungiDB:SPAC1F3.10c"/>
<dbReference type="eggNOG" id="KOG2090">
    <property type="taxonomic scope" value="Eukaryota"/>
</dbReference>
<dbReference type="HOGENOM" id="CLU_001805_0_0_1"/>
<dbReference type="InParanoid" id="Q10415"/>
<dbReference type="OMA" id="ALMFEYM"/>
<dbReference type="PhylomeDB" id="Q10415"/>
<dbReference type="PRO" id="PR:Q10415"/>
<dbReference type="Proteomes" id="UP000002485">
    <property type="component" value="Chromosome I"/>
</dbReference>
<dbReference type="GO" id="GO:0005759">
    <property type="term" value="C:mitochondrial matrix"/>
    <property type="evidence" value="ECO:0000250"/>
    <property type="project" value="PomBase"/>
</dbReference>
<dbReference type="GO" id="GO:0005739">
    <property type="term" value="C:mitochondrion"/>
    <property type="evidence" value="ECO:0007005"/>
    <property type="project" value="PomBase"/>
</dbReference>
<dbReference type="GO" id="GO:0046872">
    <property type="term" value="F:metal ion binding"/>
    <property type="evidence" value="ECO:0007669"/>
    <property type="project" value="UniProtKB-KW"/>
</dbReference>
<dbReference type="GO" id="GO:0004222">
    <property type="term" value="F:metalloendopeptidase activity"/>
    <property type="evidence" value="ECO:0000318"/>
    <property type="project" value="GO_Central"/>
</dbReference>
<dbReference type="GO" id="GO:0006879">
    <property type="term" value="P:intracellular iron ion homeostasis"/>
    <property type="evidence" value="ECO:0000266"/>
    <property type="project" value="PomBase"/>
</dbReference>
<dbReference type="GO" id="GO:0006518">
    <property type="term" value="P:peptide metabolic process"/>
    <property type="evidence" value="ECO:0000318"/>
    <property type="project" value="GO_Central"/>
</dbReference>
<dbReference type="GO" id="GO:0006627">
    <property type="term" value="P:protein processing involved in protein targeting to mitochondrion"/>
    <property type="evidence" value="ECO:0000318"/>
    <property type="project" value="GO_Central"/>
</dbReference>
<dbReference type="CDD" id="cd06457">
    <property type="entry name" value="M3A_MIP"/>
    <property type="match status" value="1"/>
</dbReference>
<dbReference type="Gene3D" id="3.40.390.10">
    <property type="entry name" value="Collagenase (Catalytic Domain)"/>
    <property type="match status" value="1"/>
</dbReference>
<dbReference type="Gene3D" id="1.10.1370.10">
    <property type="entry name" value="Neurolysin, domain 3"/>
    <property type="match status" value="1"/>
</dbReference>
<dbReference type="InterPro" id="IPR033851">
    <property type="entry name" value="M3A_MIP"/>
</dbReference>
<dbReference type="InterPro" id="IPR024079">
    <property type="entry name" value="MetalloPept_cat_dom_sf"/>
</dbReference>
<dbReference type="InterPro" id="IPR024077">
    <property type="entry name" value="Neurolysin/TOP_dom2"/>
</dbReference>
<dbReference type="InterPro" id="IPR045090">
    <property type="entry name" value="Pept_M3A_M3B"/>
</dbReference>
<dbReference type="InterPro" id="IPR001567">
    <property type="entry name" value="Pept_M3A_M3B_dom"/>
</dbReference>
<dbReference type="PANTHER" id="PTHR11804:SF79">
    <property type="entry name" value="MITOCHONDRIAL INTERMEDIATE PEPTIDASE"/>
    <property type="match status" value="1"/>
</dbReference>
<dbReference type="PANTHER" id="PTHR11804">
    <property type="entry name" value="PROTEASE M3 THIMET OLIGOPEPTIDASE-RELATED"/>
    <property type="match status" value="1"/>
</dbReference>
<dbReference type="Pfam" id="PF01432">
    <property type="entry name" value="Peptidase_M3"/>
    <property type="match status" value="1"/>
</dbReference>
<dbReference type="SUPFAM" id="SSF55486">
    <property type="entry name" value="Metalloproteases ('zincins'), catalytic domain"/>
    <property type="match status" value="1"/>
</dbReference>
<dbReference type="PROSITE" id="PS00142">
    <property type="entry name" value="ZINC_PROTEASE"/>
    <property type="match status" value="1"/>
</dbReference>
<name>PMIP_SCHPO</name>
<organism>
    <name type="scientific">Schizosaccharomyces pombe (strain 972 / ATCC 24843)</name>
    <name type="common">Fission yeast</name>
    <dbReference type="NCBI Taxonomy" id="284812"/>
    <lineage>
        <taxon>Eukaryota</taxon>
        <taxon>Fungi</taxon>
        <taxon>Dikarya</taxon>
        <taxon>Ascomycota</taxon>
        <taxon>Taphrinomycotina</taxon>
        <taxon>Schizosaccharomycetes</taxon>
        <taxon>Schizosaccharomycetales</taxon>
        <taxon>Schizosaccharomycetaceae</taxon>
        <taxon>Schizosaccharomyces</taxon>
    </lineage>
</organism>
<keyword id="KW-0378">Hydrolase</keyword>
<keyword id="KW-0479">Metal-binding</keyword>
<keyword id="KW-0482">Metalloprotease</keyword>
<keyword id="KW-0496">Mitochondrion</keyword>
<keyword id="KW-0645">Protease</keyword>
<keyword id="KW-1185">Reference proteome</keyword>
<keyword id="KW-0809">Transit peptide</keyword>
<keyword id="KW-0862">Zinc</keyword>
<reference key="1">
    <citation type="journal article" date="2002" name="Nature">
        <title>The genome sequence of Schizosaccharomyces pombe.</title>
        <authorList>
            <person name="Wood V."/>
            <person name="Gwilliam R."/>
            <person name="Rajandream M.A."/>
            <person name="Lyne M.H."/>
            <person name="Lyne R."/>
            <person name="Stewart A."/>
            <person name="Sgouros J.G."/>
            <person name="Peat N."/>
            <person name="Hayles J."/>
            <person name="Baker S.G."/>
            <person name="Basham D."/>
            <person name="Bowman S."/>
            <person name="Brooks K."/>
            <person name="Brown D."/>
            <person name="Brown S."/>
            <person name="Chillingworth T."/>
            <person name="Churcher C.M."/>
            <person name="Collins M."/>
            <person name="Connor R."/>
            <person name="Cronin A."/>
            <person name="Davis P."/>
            <person name="Feltwell T."/>
            <person name="Fraser A."/>
            <person name="Gentles S."/>
            <person name="Goble A."/>
            <person name="Hamlin N."/>
            <person name="Harris D.E."/>
            <person name="Hidalgo J."/>
            <person name="Hodgson G."/>
            <person name="Holroyd S."/>
            <person name="Hornsby T."/>
            <person name="Howarth S."/>
            <person name="Huckle E.J."/>
            <person name="Hunt S."/>
            <person name="Jagels K."/>
            <person name="James K.D."/>
            <person name="Jones L."/>
            <person name="Jones M."/>
            <person name="Leather S."/>
            <person name="McDonald S."/>
            <person name="McLean J."/>
            <person name="Mooney P."/>
            <person name="Moule S."/>
            <person name="Mungall K.L."/>
            <person name="Murphy L.D."/>
            <person name="Niblett D."/>
            <person name="Odell C."/>
            <person name="Oliver K."/>
            <person name="O'Neil S."/>
            <person name="Pearson D."/>
            <person name="Quail M.A."/>
            <person name="Rabbinowitsch E."/>
            <person name="Rutherford K.M."/>
            <person name="Rutter S."/>
            <person name="Saunders D."/>
            <person name="Seeger K."/>
            <person name="Sharp S."/>
            <person name="Skelton J."/>
            <person name="Simmonds M.N."/>
            <person name="Squares R."/>
            <person name="Squares S."/>
            <person name="Stevens K."/>
            <person name="Taylor K."/>
            <person name="Taylor R.G."/>
            <person name="Tivey A."/>
            <person name="Walsh S.V."/>
            <person name="Warren T."/>
            <person name="Whitehead S."/>
            <person name="Woodward J.R."/>
            <person name="Volckaert G."/>
            <person name="Aert R."/>
            <person name="Robben J."/>
            <person name="Grymonprez B."/>
            <person name="Weltjens I."/>
            <person name="Vanstreels E."/>
            <person name="Rieger M."/>
            <person name="Schaefer M."/>
            <person name="Mueller-Auer S."/>
            <person name="Gabel C."/>
            <person name="Fuchs M."/>
            <person name="Duesterhoeft A."/>
            <person name="Fritzc C."/>
            <person name="Holzer E."/>
            <person name="Moestl D."/>
            <person name="Hilbert H."/>
            <person name="Borzym K."/>
            <person name="Langer I."/>
            <person name="Beck A."/>
            <person name="Lehrach H."/>
            <person name="Reinhardt R."/>
            <person name="Pohl T.M."/>
            <person name="Eger P."/>
            <person name="Zimmermann W."/>
            <person name="Wedler H."/>
            <person name="Wambutt R."/>
            <person name="Purnelle B."/>
            <person name="Goffeau A."/>
            <person name="Cadieu E."/>
            <person name="Dreano S."/>
            <person name="Gloux S."/>
            <person name="Lelaure V."/>
            <person name="Mottier S."/>
            <person name="Galibert F."/>
            <person name="Aves S.J."/>
            <person name="Xiang Z."/>
            <person name="Hunt C."/>
            <person name="Moore K."/>
            <person name="Hurst S.M."/>
            <person name="Lucas M."/>
            <person name="Rochet M."/>
            <person name="Gaillardin C."/>
            <person name="Tallada V.A."/>
            <person name="Garzon A."/>
            <person name="Thode G."/>
            <person name="Daga R.R."/>
            <person name="Cruzado L."/>
            <person name="Jimenez J."/>
            <person name="Sanchez M."/>
            <person name="del Rey F."/>
            <person name="Benito J."/>
            <person name="Dominguez A."/>
            <person name="Revuelta J.L."/>
            <person name="Moreno S."/>
            <person name="Armstrong J."/>
            <person name="Forsburg S.L."/>
            <person name="Cerutti L."/>
            <person name="Lowe T."/>
            <person name="McCombie W.R."/>
            <person name="Paulsen I."/>
            <person name="Potashkin J."/>
            <person name="Shpakovski G.V."/>
            <person name="Ussery D."/>
            <person name="Barrell B.G."/>
            <person name="Nurse P."/>
        </authorList>
    </citation>
    <scope>NUCLEOTIDE SEQUENCE [LARGE SCALE GENOMIC DNA]</scope>
    <source>
        <strain>972 / ATCC 24843</strain>
    </source>
</reference>
<accession>Q10415</accession>
<comment type="function">
    <text evidence="1">Cleaves proteins, imported into the mitochondrion, to their mature size. While most mitochondrial precursor proteins are processed to the mature form in one step by mitochondrial processing peptidase (MPP), the sequential cleavage by MIP of an octapeptide after initial processing by MPP is a required step for a subgroup of nuclear-encoded precursor proteins destined for the matrix or the inner membrane (By similarity).</text>
</comment>
<comment type="catalytic activity">
    <reaction>
        <text>Release of an N-terminal octapeptide as second stage of processing of some proteins imported into the mitochondrion.</text>
        <dbReference type="EC" id="3.4.24.59"/>
    </reaction>
</comment>
<comment type="cofactor">
    <cofactor evidence="1">
        <name>Zn(2+)</name>
        <dbReference type="ChEBI" id="CHEBI:29105"/>
    </cofactor>
    <text evidence="1">Binds 1 zinc ion.</text>
</comment>
<comment type="subcellular location">
    <subcellularLocation>
        <location evidence="1">Mitochondrion matrix</location>
    </subcellularLocation>
</comment>
<comment type="similarity">
    <text evidence="4">Belongs to the peptidase M3 family.</text>
</comment>
<sequence length="762" mass="86286">MQVRTLLTLGKKKVIGNRQCILSLYRKYSNVQSRKAEDQLLRQIFDDQNIAVNQITKRNGIQGVGLFRNHFLSDKDTGFLRLAETASEKCKAVIEDLLLEDTEDGSIVVSKFDRISNLLCSVIDLFEFVRCAHPDKMVVMKAEEAYSYLFELMNTLNTHQGLYEKLKCSLQQTPTLKDTDPEAYTVGRVFLQDFEKSGVNLESSKRNSFVKKSSESATLGRAFFNNSMNRPQRYLTISKQRLAGSDPYFVRSLSKNDKNFIMIPTVGYEGTQALISVANPDVRKEIYMEGHKGTVEEVELLNSYLRSKAEVAKLVGKSSFADLQLIDKMANAPKHVVEFLENLSLKNSSVLKKILNNLALMKKKELNLNFLPSFDVWDREYYTARYKQSLINQKPSLNPSITNYRRFFSVGTVIQGLSRLFSSLYGLRFVPADISPGEVWHPDVNKVNVYNENDHVMGVIYFDLFARTGKTDGAAHFTIRSSRELDLTSFDDSISLGFDDATNIRVKDNKRYQIPVISLLCNFVRSSGMDPTFLDLWDVKTLFHEMGHAMHSILGHTKYQNLAGTRCATDFVELPSIIMEFFMSNPAVLPLYARYEGTEIPLPVQVLNHHNMVENSSAPLDLQSQICMAMVDQLFHSKVVLDPSFNSIDEVTNVTRKFSGFESAPPAAWYLQFSHLYGYSATYYSYIFDTVLASLIFSKLFAGNPLSREAGEKFRKAILRWGGSRSPWECVAEALEQPILATGGEEAMRRIGSEGIKATSTF</sequence>
<feature type="transit peptide" description="Mitochondrion" evidence="2">
    <location>
        <begin position="1"/>
        <end position="28"/>
    </location>
</feature>
<feature type="chain" id="PRO_0000028582" description="Mitochondrial intermediate peptidase">
    <location>
        <begin position="29"/>
        <end position="762"/>
    </location>
</feature>
<feature type="active site" evidence="3">
    <location>
        <position position="545"/>
    </location>
</feature>
<feature type="binding site" evidence="3">
    <location>
        <position position="544"/>
    </location>
    <ligand>
        <name>Zn(2+)</name>
        <dbReference type="ChEBI" id="CHEBI:29105"/>
        <note>catalytic</note>
    </ligand>
</feature>
<feature type="binding site" evidence="3">
    <location>
        <position position="548"/>
    </location>
    <ligand>
        <name>Zn(2+)</name>
        <dbReference type="ChEBI" id="CHEBI:29105"/>
        <note>catalytic</note>
    </ligand>
</feature>
<feature type="binding site" evidence="3">
    <location>
        <position position="551"/>
    </location>
    <ligand>
        <name>Zn(2+)</name>
        <dbReference type="ChEBI" id="CHEBI:29105"/>
        <note>catalytic</note>
    </ligand>
</feature>
<proteinExistence type="inferred from homology"/>